<dbReference type="EMBL" id="Z81356">
    <property type="protein sequence ID" value="CAB03689.1"/>
    <property type="molecule type" value="Genomic_DNA"/>
</dbReference>
<dbReference type="EMBL" id="AL009126">
    <property type="protein sequence ID" value="CAB15689.1"/>
    <property type="molecule type" value="Genomic_DNA"/>
</dbReference>
<dbReference type="PIR" id="A70063">
    <property type="entry name" value="A70063"/>
</dbReference>
<dbReference type="RefSeq" id="NP_391553.1">
    <property type="nucleotide sequence ID" value="NC_000964.3"/>
</dbReference>
<dbReference type="RefSeq" id="WP_003227706.1">
    <property type="nucleotide sequence ID" value="NZ_OZ025638.1"/>
</dbReference>
<dbReference type="SMR" id="P70966"/>
<dbReference type="FunCoup" id="P70966">
    <property type="interactions" value="57"/>
</dbReference>
<dbReference type="STRING" id="224308.BSU36720"/>
<dbReference type="PaxDb" id="224308-BSU36720"/>
<dbReference type="EnsemblBacteria" id="CAB15689">
    <property type="protein sequence ID" value="CAB15689"/>
    <property type="gene ID" value="BSU_36720"/>
</dbReference>
<dbReference type="GeneID" id="936977"/>
<dbReference type="KEGG" id="bsu:BSU36720"/>
<dbReference type="PATRIC" id="fig|224308.179.peg.3975"/>
<dbReference type="InParanoid" id="P70966"/>
<dbReference type="OrthoDB" id="2930244at2"/>
<dbReference type="BioCyc" id="BSUB:BSU36720-MONOMER"/>
<dbReference type="Proteomes" id="UP000001570">
    <property type="component" value="Chromosome"/>
</dbReference>
<dbReference type="GO" id="GO:0005886">
    <property type="term" value="C:plasma membrane"/>
    <property type="evidence" value="ECO:0007669"/>
    <property type="project" value="UniProtKB-SubCell"/>
</dbReference>
<reference key="1">
    <citation type="journal article" date="1997" name="Microbiology">
        <title>The Bacillus subtilis genome from gerBC (311 degrees) to licR (334 degrees).</title>
        <authorList>
            <person name="Presecan E."/>
            <person name="Moszer I."/>
            <person name="Boursier L."/>
            <person name="Cruz Ramos H."/>
            <person name="De La Fuente V."/>
            <person name="Hullo M.-F."/>
            <person name="Lelong C."/>
            <person name="Schleich S."/>
            <person name="Sekowska A."/>
            <person name="Song B.H."/>
            <person name="Villani G."/>
            <person name="Kunst F."/>
            <person name="Danchin A."/>
            <person name="Glaser P."/>
        </authorList>
    </citation>
    <scope>NUCLEOTIDE SEQUENCE [GENOMIC DNA]</scope>
    <source>
        <strain>168</strain>
    </source>
</reference>
<reference key="2">
    <citation type="journal article" date="1997" name="Nature">
        <title>The complete genome sequence of the Gram-positive bacterium Bacillus subtilis.</title>
        <authorList>
            <person name="Kunst F."/>
            <person name="Ogasawara N."/>
            <person name="Moszer I."/>
            <person name="Albertini A.M."/>
            <person name="Alloni G."/>
            <person name="Azevedo V."/>
            <person name="Bertero M.G."/>
            <person name="Bessieres P."/>
            <person name="Bolotin A."/>
            <person name="Borchert S."/>
            <person name="Borriss R."/>
            <person name="Boursier L."/>
            <person name="Brans A."/>
            <person name="Braun M."/>
            <person name="Brignell S.C."/>
            <person name="Bron S."/>
            <person name="Brouillet S."/>
            <person name="Bruschi C.V."/>
            <person name="Caldwell B."/>
            <person name="Capuano V."/>
            <person name="Carter N.M."/>
            <person name="Choi S.-K."/>
            <person name="Codani J.-J."/>
            <person name="Connerton I.F."/>
            <person name="Cummings N.J."/>
            <person name="Daniel R.A."/>
            <person name="Denizot F."/>
            <person name="Devine K.M."/>
            <person name="Duesterhoeft A."/>
            <person name="Ehrlich S.D."/>
            <person name="Emmerson P.T."/>
            <person name="Entian K.-D."/>
            <person name="Errington J."/>
            <person name="Fabret C."/>
            <person name="Ferrari E."/>
            <person name="Foulger D."/>
            <person name="Fritz C."/>
            <person name="Fujita M."/>
            <person name="Fujita Y."/>
            <person name="Fuma S."/>
            <person name="Galizzi A."/>
            <person name="Galleron N."/>
            <person name="Ghim S.-Y."/>
            <person name="Glaser P."/>
            <person name="Goffeau A."/>
            <person name="Golightly E.J."/>
            <person name="Grandi G."/>
            <person name="Guiseppi G."/>
            <person name="Guy B.J."/>
            <person name="Haga K."/>
            <person name="Haiech J."/>
            <person name="Harwood C.R."/>
            <person name="Henaut A."/>
            <person name="Hilbert H."/>
            <person name="Holsappel S."/>
            <person name="Hosono S."/>
            <person name="Hullo M.-F."/>
            <person name="Itaya M."/>
            <person name="Jones L.-M."/>
            <person name="Joris B."/>
            <person name="Karamata D."/>
            <person name="Kasahara Y."/>
            <person name="Klaerr-Blanchard M."/>
            <person name="Klein C."/>
            <person name="Kobayashi Y."/>
            <person name="Koetter P."/>
            <person name="Koningstein G."/>
            <person name="Krogh S."/>
            <person name="Kumano M."/>
            <person name="Kurita K."/>
            <person name="Lapidus A."/>
            <person name="Lardinois S."/>
            <person name="Lauber J."/>
            <person name="Lazarevic V."/>
            <person name="Lee S.-M."/>
            <person name="Levine A."/>
            <person name="Liu H."/>
            <person name="Masuda S."/>
            <person name="Mauel C."/>
            <person name="Medigue C."/>
            <person name="Medina N."/>
            <person name="Mellado R.P."/>
            <person name="Mizuno M."/>
            <person name="Moestl D."/>
            <person name="Nakai S."/>
            <person name="Noback M."/>
            <person name="Noone D."/>
            <person name="O'Reilly M."/>
            <person name="Ogawa K."/>
            <person name="Ogiwara A."/>
            <person name="Oudega B."/>
            <person name="Park S.-H."/>
            <person name="Parro V."/>
            <person name="Pohl T.M."/>
            <person name="Portetelle D."/>
            <person name="Porwollik S."/>
            <person name="Prescott A.M."/>
            <person name="Presecan E."/>
            <person name="Pujic P."/>
            <person name="Purnelle B."/>
            <person name="Rapoport G."/>
            <person name="Rey M."/>
            <person name="Reynolds S."/>
            <person name="Rieger M."/>
            <person name="Rivolta C."/>
            <person name="Rocha E."/>
            <person name="Roche B."/>
            <person name="Rose M."/>
            <person name="Sadaie Y."/>
            <person name="Sato T."/>
            <person name="Scanlan E."/>
            <person name="Schleich S."/>
            <person name="Schroeter R."/>
            <person name="Scoffone F."/>
            <person name="Sekiguchi J."/>
            <person name="Sekowska A."/>
            <person name="Seror S.J."/>
            <person name="Serror P."/>
            <person name="Shin B.-S."/>
            <person name="Soldo B."/>
            <person name="Sorokin A."/>
            <person name="Tacconi E."/>
            <person name="Takagi T."/>
            <person name="Takahashi H."/>
            <person name="Takemaru K."/>
            <person name="Takeuchi M."/>
            <person name="Tamakoshi A."/>
            <person name="Tanaka T."/>
            <person name="Terpstra P."/>
            <person name="Tognoni A."/>
            <person name="Tosato V."/>
            <person name="Uchiyama S."/>
            <person name="Vandenbol M."/>
            <person name="Vannier F."/>
            <person name="Vassarotti A."/>
            <person name="Viari A."/>
            <person name="Wambutt R."/>
            <person name="Wedler E."/>
            <person name="Wedler H."/>
            <person name="Weitzenegger T."/>
            <person name="Winters P."/>
            <person name="Wipat A."/>
            <person name="Yamamoto H."/>
            <person name="Yamane K."/>
            <person name="Yasumoto K."/>
            <person name="Yata K."/>
            <person name="Yoshida K."/>
            <person name="Yoshikawa H.-F."/>
            <person name="Zumstein E."/>
            <person name="Yoshikawa H."/>
            <person name="Danchin A."/>
        </authorList>
    </citation>
    <scope>NUCLEOTIDE SEQUENCE [LARGE SCALE GENOMIC DNA]</scope>
    <source>
        <strain>168</strain>
    </source>
</reference>
<proteinExistence type="predicted"/>
<evidence type="ECO:0000255" key="1"/>
<evidence type="ECO:0000305" key="2"/>
<keyword id="KW-1003">Cell membrane</keyword>
<keyword id="KW-0472">Membrane</keyword>
<keyword id="KW-1185">Reference proteome</keyword>
<keyword id="KW-0812">Transmembrane</keyword>
<keyword id="KW-1133">Transmembrane helix</keyword>
<gene>
    <name type="primary">ywmE</name>
    <name type="ordered locus">BSU36720</name>
</gene>
<comment type="subcellular location">
    <subcellularLocation>
        <location evidence="2">Cell membrane</location>
        <topology evidence="2">Multi-pass membrane protein</topology>
    </subcellularLocation>
</comment>
<organism>
    <name type="scientific">Bacillus subtilis (strain 168)</name>
    <dbReference type="NCBI Taxonomy" id="224308"/>
    <lineage>
        <taxon>Bacteria</taxon>
        <taxon>Bacillati</taxon>
        <taxon>Bacillota</taxon>
        <taxon>Bacilli</taxon>
        <taxon>Bacillales</taxon>
        <taxon>Bacillaceae</taxon>
        <taxon>Bacillus</taxon>
    </lineage>
</organism>
<accession>P70966</accession>
<sequence length="53" mass="5896">MKLFGMIFLIATVAFILLGVLLKLAAFFFVSILTLIAAIVLFTVLKKNQHNQT</sequence>
<protein>
    <recommendedName>
        <fullName>Uncharacterized protein YwmE</fullName>
    </recommendedName>
</protein>
<feature type="chain" id="PRO_0000049985" description="Uncharacterized protein YwmE">
    <location>
        <begin position="1"/>
        <end position="53"/>
    </location>
</feature>
<feature type="transmembrane region" description="Helical" evidence="1">
    <location>
        <begin position="3"/>
        <end position="22"/>
    </location>
</feature>
<feature type="transmembrane region" description="Helical" evidence="1">
    <location>
        <begin position="26"/>
        <end position="45"/>
    </location>
</feature>
<name>YWME_BACSU</name>